<proteinExistence type="predicted"/>
<sequence length="100" mass="10424">MQRRTQELIWKELVDNSHKLFCNCMDPQNHYRLICQNLNREPGEPWRTAGGIGEGGAGGDGAAAGGEGDVHGRPAGAEDGEDGADAAMAAALAAFEDATG</sequence>
<gene>
    <name type="ORF">ORF2</name>
</gene>
<organism>
    <name type="scientific">Torque teno tamarin virus (isolate So-TTV2)</name>
    <dbReference type="NCBI Taxonomy" id="766186"/>
    <lineage>
        <taxon>Viruses</taxon>
        <taxon>Viruses incertae sedis</taxon>
        <taxon>Anelloviridae</taxon>
        <taxon>Epsilontorquevirus</taxon>
        <taxon>Epsilontorquevirus calli1</taxon>
    </lineage>
</organism>
<name>ORF2_TTVE1</name>
<keyword id="KW-1185">Reference proteome</keyword>
<reference key="1">
    <citation type="journal article" date="2000" name="Virology">
        <title>Species-specific TT viruses in humans and nonhuman primates and their phylogenetic relatedness.</title>
        <authorList>
            <person name="Okamoto H."/>
            <person name="Nishizawa T."/>
            <person name="Tawara A."/>
            <person name="Peng Y."/>
            <person name="Takahashi M."/>
            <person name="Kishimoto J."/>
            <person name="Tanaka T."/>
            <person name="Miyakawa Y."/>
            <person name="Mayumi M."/>
        </authorList>
    </citation>
    <scope>NUCLEOTIDE SEQUENCE [GENOMIC DNA]</scope>
</reference>
<dbReference type="EMBL" id="AB041960">
    <property type="protein sequence ID" value="BAB19315.1"/>
    <property type="molecule type" value="Genomic_DNA"/>
</dbReference>
<dbReference type="RefSeq" id="YP_003587879.1">
    <property type="nucleotide sequence ID" value="NC_014085.1"/>
</dbReference>
<dbReference type="KEGG" id="vg:9086646"/>
<dbReference type="Proteomes" id="UP000008780">
    <property type="component" value="Segment"/>
</dbReference>
<organismHost>
    <name type="scientific">Saguinus imperator</name>
    <name type="common">Emperor tamarin</name>
    <dbReference type="NCBI Taxonomy" id="9491"/>
</organismHost>
<accession>Q9DUC2</accession>
<protein>
    <recommendedName>
        <fullName>Uncharacterized ORF2 protein</fullName>
    </recommendedName>
</protein>
<evidence type="ECO:0000256" key="1">
    <source>
        <dbReference type="SAM" id="MobiDB-lite"/>
    </source>
</evidence>
<feature type="chain" id="PRO_0000404282" description="Uncharacterized ORF2 protein">
    <location>
        <begin position="1"/>
        <end position="100"/>
    </location>
</feature>
<feature type="region of interest" description="Disordered" evidence="1">
    <location>
        <begin position="42"/>
        <end position="84"/>
    </location>
</feature>
<feature type="compositionally biased region" description="Gly residues" evidence="1">
    <location>
        <begin position="50"/>
        <end position="67"/>
    </location>
</feature>